<protein>
    <recommendedName>
        <fullName>Serine incorporator 1</fullName>
    </recommendedName>
    <alternativeName>
        <fullName>Axotomy-induced glyco/Golgi protein 2</fullName>
    </alternativeName>
    <alternativeName>
        <fullName>Membrane protein TMS-2</fullName>
    </alternativeName>
    <alternativeName>
        <fullName>Tumor differentially expressed protein 1-like</fullName>
    </alternativeName>
    <alternativeName>
        <fullName>Tumor differentially expressed protein 2</fullName>
    </alternativeName>
</protein>
<keyword id="KW-0256">Endoplasmic reticulum</keyword>
<keyword id="KW-0444">Lipid biosynthesis</keyword>
<keyword id="KW-0443">Lipid metabolism</keyword>
<keyword id="KW-0449">Lipoprotein</keyword>
<keyword id="KW-0472">Membrane</keyword>
<keyword id="KW-0519">Myristate</keyword>
<keyword id="KW-0594">Phospholipid biosynthesis</keyword>
<keyword id="KW-1208">Phospholipid metabolism</keyword>
<keyword id="KW-0597">Phosphoprotein</keyword>
<keyword id="KW-1185">Reference proteome</keyword>
<keyword id="KW-0812">Transmembrane</keyword>
<keyword id="KW-1133">Transmembrane helix</keyword>
<dbReference type="EMBL" id="AF181685">
    <property type="protein sequence ID" value="AAD54421.1"/>
    <property type="molecule type" value="mRNA"/>
</dbReference>
<dbReference type="EMBL" id="AB078030">
    <property type="protein sequence ID" value="BAC05512.1"/>
    <property type="molecule type" value="Genomic_DNA"/>
</dbReference>
<dbReference type="EMBL" id="AK002847">
    <property type="protein sequence ID" value="BAB22403.1"/>
    <property type="molecule type" value="mRNA"/>
</dbReference>
<dbReference type="EMBL" id="AK005203">
    <property type="protein sequence ID" value="BAB23881.1"/>
    <property type="molecule type" value="mRNA"/>
</dbReference>
<dbReference type="EMBL" id="AK088340">
    <property type="protein sequence ID" value="BAC40293.1"/>
    <property type="molecule type" value="mRNA"/>
</dbReference>
<dbReference type="EMBL" id="AK133668">
    <property type="protein sequence ID" value="BAE21775.1"/>
    <property type="molecule type" value="mRNA"/>
</dbReference>
<dbReference type="EMBL" id="AK133975">
    <property type="protein sequence ID" value="BAE21964.1"/>
    <property type="molecule type" value="mRNA"/>
</dbReference>
<dbReference type="EMBL" id="AK135359">
    <property type="protein sequence ID" value="BAE22504.1"/>
    <property type="molecule type" value="mRNA"/>
</dbReference>
<dbReference type="EMBL" id="AK141574">
    <property type="protein sequence ID" value="BAE24743.1"/>
    <property type="molecule type" value="mRNA"/>
</dbReference>
<dbReference type="EMBL" id="AK148745">
    <property type="protein sequence ID" value="BAE28654.1"/>
    <property type="molecule type" value="mRNA"/>
</dbReference>
<dbReference type="EMBL" id="AK159280">
    <property type="protein sequence ID" value="BAE34958.1"/>
    <property type="molecule type" value="mRNA"/>
</dbReference>
<dbReference type="EMBL" id="AK159436">
    <property type="protein sequence ID" value="BAE35082.1"/>
    <property type="molecule type" value="mRNA"/>
</dbReference>
<dbReference type="EMBL" id="BC017148">
    <property type="protein sequence ID" value="AAH17148.1"/>
    <property type="molecule type" value="mRNA"/>
</dbReference>
<dbReference type="CCDS" id="CCDS23853.1"/>
<dbReference type="RefSeq" id="NP_062734.1">
    <property type="nucleotide sequence ID" value="NM_019760.4"/>
</dbReference>
<dbReference type="SMR" id="Q9QZI8"/>
<dbReference type="BioGRID" id="207983">
    <property type="interactions" value="1"/>
</dbReference>
<dbReference type="FunCoup" id="Q9QZI8">
    <property type="interactions" value="2742"/>
</dbReference>
<dbReference type="STRING" id="10090.ENSMUSP00000020027"/>
<dbReference type="iPTMnet" id="Q9QZI8"/>
<dbReference type="PhosphoSitePlus" id="Q9QZI8"/>
<dbReference type="SwissPalm" id="Q9QZI8"/>
<dbReference type="jPOST" id="Q9QZI8"/>
<dbReference type="PaxDb" id="10090-ENSMUSP00000020027"/>
<dbReference type="ProteomicsDB" id="261320"/>
<dbReference type="Pumba" id="Q9QZI8"/>
<dbReference type="Antibodypedia" id="46589">
    <property type="antibodies" value="181 antibodies from 25 providers"/>
</dbReference>
<dbReference type="DNASU" id="56442"/>
<dbReference type="Ensembl" id="ENSMUST00000020027.11">
    <property type="protein sequence ID" value="ENSMUSP00000020027.5"/>
    <property type="gene ID" value="ENSMUSG00000019877.11"/>
</dbReference>
<dbReference type="GeneID" id="56442"/>
<dbReference type="KEGG" id="mmu:56442"/>
<dbReference type="UCSC" id="uc007fcm.3">
    <property type="organism name" value="mouse"/>
</dbReference>
<dbReference type="AGR" id="MGI:1926228"/>
<dbReference type="CTD" id="57515"/>
<dbReference type="MGI" id="MGI:1926228">
    <property type="gene designation" value="Serinc1"/>
</dbReference>
<dbReference type="VEuPathDB" id="HostDB:ENSMUSG00000019877"/>
<dbReference type="eggNOG" id="KOG2592">
    <property type="taxonomic scope" value="Eukaryota"/>
</dbReference>
<dbReference type="GeneTree" id="ENSGT01030000234623"/>
<dbReference type="HOGENOM" id="CLU_029574_5_0_1"/>
<dbReference type="InParanoid" id="Q9QZI8"/>
<dbReference type="OMA" id="DKHCNPL"/>
<dbReference type="OrthoDB" id="5963193at2759"/>
<dbReference type="PhylomeDB" id="Q9QZI8"/>
<dbReference type="TreeFam" id="TF312881"/>
<dbReference type="Reactome" id="R-MMU-977347">
    <property type="pathway name" value="Serine biosynthesis"/>
</dbReference>
<dbReference type="BioGRID-ORCS" id="56442">
    <property type="hits" value="3 hits in 82 CRISPR screens"/>
</dbReference>
<dbReference type="ChiTaRS" id="Serinc1">
    <property type="organism name" value="mouse"/>
</dbReference>
<dbReference type="PRO" id="PR:Q9QZI8"/>
<dbReference type="Proteomes" id="UP000000589">
    <property type="component" value="Chromosome 10"/>
</dbReference>
<dbReference type="RNAct" id="Q9QZI8">
    <property type="molecule type" value="protein"/>
</dbReference>
<dbReference type="Bgee" id="ENSMUSG00000019877">
    <property type="expression patterns" value="Expressed in cerebellum lobe and 268 other cell types or tissues"/>
</dbReference>
<dbReference type="ExpressionAtlas" id="Q9QZI8">
    <property type="expression patterns" value="baseline and differential"/>
</dbReference>
<dbReference type="GO" id="GO:0005789">
    <property type="term" value="C:endoplasmic reticulum membrane"/>
    <property type="evidence" value="ECO:0000250"/>
    <property type="project" value="HGNC-UCL"/>
</dbReference>
<dbReference type="GO" id="GO:0005886">
    <property type="term" value="C:plasma membrane"/>
    <property type="evidence" value="ECO:0000314"/>
    <property type="project" value="MGI"/>
</dbReference>
<dbReference type="GO" id="GO:0010698">
    <property type="term" value="F:acetyltransferase activator activity"/>
    <property type="evidence" value="ECO:0000250"/>
    <property type="project" value="BHF-UCL"/>
</dbReference>
<dbReference type="GO" id="GO:0030674">
    <property type="term" value="F:protein-macromolecule adaptor activity"/>
    <property type="evidence" value="ECO:0000250"/>
    <property type="project" value="BHF-UCL"/>
</dbReference>
<dbReference type="GO" id="GO:0044091">
    <property type="term" value="P:membrane biogenesis"/>
    <property type="evidence" value="ECO:0000250"/>
    <property type="project" value="BHF-UCL"/>
</dbReference>
<dbReference type="GO" id="GO:0006658">
    <property type="term" value="P:phosphatidylserine metabolic process"/>
    <property type="evidence" value="ECO:0000250"/>
    <property type="project" value="HGNC-UCL"/>
</dbReference>
<dbReference type="GO" id="GO:0008654">
    <property type="term" value="P:phospholipid biosynthetic process"/>
    <property type="evidence" value="ECO:0007669"/>
    <property type="project" value="UniProtKB-KW"/>
</dbReference>
<dbReference type="GO" id="GO:0006665">
    <property type="term" value="P:sphingolipid metabolic process"/>
    <property type="evidence" value="ECO:0000250"/>
    <property type="project" value="HGNC-UCL"/>
</dbReference>
<dbReference type="InterPro" id="IPR005016">
    <property type="entry name" value="TDE1/TMS"/>
</dbReference>
<dbReference type="PANTHER" id="PTHR10383">
    <property type="entry name" value="SERINE INCORPORATOR"/>
    <property type="match status" value="1"/>
</dbReference>
<dbReference type="PANTHER" id="PTHR10383:SF15">
    <property type="entry name" value="SERINE INCORPORATOR 1"/>
    <property type="match status" value="1"/>
</dbReference>
<dbReference type="Pfam" id="PF03348">
    <property type="entry name" value="Serinc"/>
    <property type="match status" value="1"/>
</dbReference>
<gene>
    <name type="primary">Serinc1</name>
    <name type="synonym">Aigp2</name>
    <name type="synonym">Tde1l</name>
    <name type="synonym">Tde2</name>
    <name type="synonym">Tms2</name>
</gene>
<accession>Q9QZI8</accession>
<accession>Q3UZ93</accession>
<feature type="initiator methionine" description="Removed" evidence="2">
    <location>
        <position position="1"/>
    </location>
</feature>
<feature type="chain" id="PRO_0000218967" description="Serine incorporator 1">
    <location>
        <begin position="2"/>
        <end position="453"/>
    </location>
</feature>
<feature type="topological domain" description="Cytoplasmic" evidence="3">
    <location>
        <begin position="2"/>
        <end position="39"/>
    </location>
</feature>
<feature type="transmembrane region" description="Helical" evidence="3">
    <location>
        <begin position="40"/>
        <end position="60"/>
    </location>
</feature>
<feature type="topological domain" description="Lumenal" evidence="3">
    <location>
        <begin position="61"/>
        <end position="88"/>
    </location>
</feature>
<feature type="transmembrane region" description="Helical" evidence="3">
    <location>
        <begin position="89"/>
        <end position="109"/>
    </location>
</feature>
<feature type="topological domain" description="Cytoplasmic" evidence="3">
    <location>
        <begin position="110"/>
        <end position="123"/>
    </location>
</feature>
<feature type="transmembrane region" description="Helical" evidence="3">
    <location>
        <begin position="124"/>
        <end position="144"/>
    </location>
</feature>
<feature type="topological domain" description="Lumenal" evidence="3">
    <location>
        <begin position="145"/>
        <end position="151"/>
    </location>
</feature>
<feature type="transmembrane region" description="Helical" evidence="3">
    <location>
        <begin position="152"/>
        <end position="172"/>
    </location>
</feature>
<feature type="topological domain" description="Cytoplasmic" evidence="3">
    <location>
        <begin position="173"/>
        <end position="197"/>
    </location>
</feature>
<feature type="transmembrane region" description="Helical" evidence="3">
    <location>
        <begin position="198"/>
        <end position="218"/>
    </location>
</feature>
<feature type="topological domain" description="Lumenal" evidence="3">
    <location>
        <begin position="219"/>
        <end position="231"/>
    </location>
</feature>
<feature type="transmembrane region" description="Helical" evidence="3">
    <location>
        <begin position="232"/>
        <end position="252"/>
    </location>
</feature>
<feature type="topological domain" description="Cytoplasmic" evidence="3">
    <location>
        <begin position="253"/>
        <end position="259"/>
    </location>
</feature>
<feature type="transmembrane region" description="Helical" evidence="3">
    <location>
        <begin position="260"/>
        <end position="280"/>
    </location>
</feature>
<feature type="topological domain" description="Lumenal" evidence="3">
    <location>
        <begin position="281"/>
        <end position="309"/>
    </location>
</feature>
<feature type="transmembrane region" description="Helical" evidence="3">
    <location>
        <begin position="310"/>
        <end position="330"/>
    </location>
</feature>
<feature type="topological domain" description="Cytoplasmic" evidence="3">
    <location>
        <begin position="331"/>
        <end position="387"/>
    </location>
</feature>
<feature type="transmembrane region" description="Helical" evidence="3">
    <location>
        <begin position="388"/>
        <end position="408"/>
    </location>
</feature>
<feature type="topological domain" description="Lumenal" evidence="3">
    <location>
        <begin position="409"/>
        <end position="426"/>
    </location>
</feature>
<feature type="transmembrane region" description="Helical" evidence="3">
    <location>
        <begin position="427"/>
        <end position="447"/>
    </location>
</feature>
<feature type="topological domain" description="Cytoplasmic" evidence="3">
    <location>
        <begin position="448"/>
        <end position="453"/>
    </location>
</feature>
<feature type="modified residue" description="Phosphoserine" evidence="2">
    <location>
        <position position="351"/>
    </location>
</feature>
<feature type="modified residue" description="Phosphothreonine" evidence="2">
    <location>
        <position position="352"/>
    </location>
</feature>
<feature type="modified residue" description="Phosphoserine" evidence="2">
    <location>
        <position position="361"/>
    </location>
</feature>
<feature type="modified residue" description="Phosphoserine" evidence="5">
    <location>
        <position position="364"/>
    </location>
</feature>
<feature type="lipid moiety-binding region" description="N-myristoyl glycine" evidence="2">
    <location>
        <position position="2"/>
    </location>
</feature>
<proteinExistence type="evidence at protein level"/>
<evidence type="ECO:0000250" key="1">
    <source>
        <dbReference type="UniProtKB" id="Q7TNK0"/>
    </source>
</evidence>
<evidence type="ECO:0000250" key="2">
    <source>
        <dbReference type="UniProtKB" id="Q9NRX5"/>
    </source>
</evidence>
<evidence type="ECO:0000255" key="3"/>
<evidence type="ECO:0000305" key="4"/>
<evidence type="ECO:0007744" key="5">
    <source>
    </source>
</evidence>
<reference key="1">
    <citation type="journal article" date="2000" name="J. Exp. Biol.">
        <title>Identification of a ubiquitous family of membrane proteins and their expression in mouse brain.</title>
        <authorList>
            <person name="Grossman T.R."/>
            <person name="Luque J.M."/>
            <person name="Nelson N."/>
        </authorList>
    </citation>
    <scope>NUCLEOTIDE SEQUENCE [MRNA]</scope>
</reference>
<reference key="2">
    <citation type="submission" date="2002-01" db="EMBL/GenBank/DDBJ databases">
        <title>An axotomy activated gene, mouse AIGP1: genomic organization, transcriptional regulation and genetic mapping on chromosome 2.</title>
        <authorList>
            <person name="Li H."/>
            <person name="Aoki S."/>
            <person name="Hara Y."/>
            <person name="Wada K."/>
        </authorList>
    </citation>
    <scope>NUCLEOTIDE SEQUENCE [GENOMIC DNA]</scope>
</reference>
<reference key="3">
    <citation type="journal article" date="2005" name="Science">
        <title>The transcriptional landscape of the mammalian genome.</title>
        <authorList>
            <person name="Carninci P."/>
            <person name="Kasukawa T."/>
            <person name="Katayama S."/>
            <person name="Gough J."/>
            <person name="Frith M.C."/>
            <person name="Maeda N."/>
            <person name="Oyama R."/>
            <person name="Ravasi T."/>
            <person name="Lenhard B."/>
            <person name="Wells C."/>
            <person name="Kodzius R."/>
            <person name="Shimokawa K."/>
            <person name="Bajic V.B."/>
            <person name="Brenner S.E."/>
            <person name="Batalov S."/>
            <person name="Forrest A.R."/>
            <person name="Zavolan M."/>
            <person name="Davis M.J."/>
            <person name="Wilming L.G."/>
            <person name="Aidinis V."/>
            <person name="Allen J.E."/>
            <person name="Ambesi-Impiombato A."/>
            <person name="Apweiler R."/>
            <person name="Aturaliya R.N."/>
            <person name="Bailey T.L."/>
            <person name="Bansal M."/>
            <person name="Baxter L."/>
            <person name="Beisel K.W."/>
            <person name="Bersano T."/>
            <person name="Bono H."/>
            <person name="Chalk A.M."/>
            <person name="Chiu K.P."/>
            <person name="Choudhary V."/>
            <person name="Christoffels A."/>
            <person name="Clutterbuck D.R."/>
            <person name="Crowe M.L."/>
            <person name="Dalla E."/>
            <person name="Dalrymple B.P."/>
            <person name="de Bono B."/>
            <person name="Della Gatta G."/>
            <person name="di Bernardo D."/>
            <person name="Down T."/>
            <person name="Engstrom P."/>
            <person name="Fagiolini M."/>
            <person name="Faulkner G."/>
            <person name="Fletcher C.F."/>
            <person name="Fukushima T."/>
            <person name="Furuno M."/>
            <person name="Futaki S."/>
            <person name="Gariboldi M."/>
            <person name="Georgii-Hemming P."/>
            <person name="Gingeras T.R."/>
            <person name="Gojobori T."/>
            <person name="Green R.E."/>
            <person name="Gustincich S."/>
            <person name="Harbers M."/>
            <person name="Hayashi Y."/>
            <person name="Hensch T.K."/>
            <person name="Hirokawa N."/>
            <person name="Hill D."/>
            <person name="Huminiecki L."/>
            <person name="Iacono M."/>
            <person name="Ikeo K."/>
            <person name="Iwama A."/>
            <person name="Ishikawa T."/>
            <person name="Jakt M."/>
            <person name="Kanapin A."/>
            <person name="Katoh M."/>
            <person name="Kawasawa Y."/>
            <person name="Kelso J."/>
            <person name="Kitamura H."/>
            <person name="Kitano H."/>
            <person name="Kollias G."/>
            <person name="Krishnan S.P."/>
            <person name="Kruger A."/>
            <person name="Kummerfeld S.K."/>
            <person name="Kurochkin I.V."/>
            <person name="Lareau L.F."/>
            <person name="Lazarevic D."/>
            <person name="Lipovich L."/>
            <person name="Liu J."/>
            <person name="Liuni S."/>
            <person name="McWilliam S."/>
            <person name="Madan Babu M."/>
            <person name="Madera M."/>
            <person name="Marchionni L."/>
            <person name="Matsuda H."/>
            <person name="Matsuzawa S."/>
            <person name="Miki H."/>
            <person name="Mignone F."/>
            <person name="Miyake S."/>
            <person name="Morris K."/>
            <person name="Mottagui-Tabar S."/>
            <person name="Mulder N."/>
            <person name="Nakano N."/>
            <person name="Nakauchi H."/>
            <person name="Ng P."/>
            <person name="Nilsson R."/>
            <person name="Nishiguchi S."/>
            <person name="Nishikawa S."/>
            <person name="Nori F."/>
            <person name="Ohara O."/>
            <person name="Okazaki Y."/>
            <person name="Orlando V."/>
            <person name="Pang K.C."/>
            <person name="Pavan W.J."/>
            <person name="Pavesi G."/>
            <person name="Pesole G."/>
            <person name="Petrovsky N."/>
            <person name="Piazza S."/>
            <person name="Reed J."/>
            <person name="Reid J.F."/>
            <person name="Ring B.Z."/>
            <person name="Ringwald M."/>
            <person name="Rost B."/>
            <person name="Ruan Y."/>
            <person name="Salzberg S.L."/>
            <person name="Sandelin A."/>
            <person name="Schneider C."/>
            <person name="Schoenbach C."/>
            <person name="Sekiguchi K."/>
            <person name="Semple C.A."/>
            <person name="Seno S."/>
            <person name="Sessa L."/>
            <person name="Sheng Y."/>
            <person name="Shibata Y."/>
            <person name="Shimada H."/>
            <person name="Shimada K."/>
            <person name="Silva D."/>
            <person name="Sinclair B."/>
            <person name="Sperling S."/>
            <person name="Stupka E."/>
            <person name="Sugiura K."/>
            <person name="Sultana R."/>
            <person name="Takenaka Y."/>
            <person name="Taki K."/>
            <person name="Tammoja K."/>
            <person name="Tan S.L."/>
            <person name="Tang S."/>
            <person name="Taylor M.S."/>
            <person name="Tegner J."/>
            <person name="Teichmann S.A."/>
            <person name="Ueda H.R."/>
            <person name="van Nimwegen E."/>
            <person name="Verardo R."/>
            <person name="Wei C.L."/>
            <person name="Yagi K."/>
            <person name="Yamanishi H."/>
            <person name="Zabarovsky E."/>
            <person name="Zhu S."/>
            <person name="Zimmer A."/>
            <person name="Hide W."/>
            <person name="Bult C."/>
            <person name="Grimmond S.M."/>
            <person name="Teasdale R.D."/>
            <person name="Liu E.T."/>
            <person name="Brusic V."/>
            <person name="Quackenbush J."/>
            <person name="Wahlestedt C."/>
            <person name="Mattick J.S."/>
            <person name="Hume D.A."/>
            <person name="Kai C."/>
            <person name="Sasaki D."/>
            <person name="Tomaru Y."/>
            <person name="Fukuda S."/>
            <person name="Kanamori-Katayama M."/>
            <person name="Suzuki M."/>
            <person name="Aoki J."/>
            <person name="Arakawa T."/>
            <person name="Iida J."/>
            <person name="Imamura K."/>
            <person name="Itoh M."/>
            <person name="Kato T."/>
            <person name="Kawaji H."/>
            <person name="Kawagashira N."/>
            <person name="Kawashima T."/>
            <person name="Kojima M."/>
            <person name="Kondo S."/>
            <person name="Konno H."/>
            <person name="Nakano K."/>
            <person name="Ninomiya N."/>
            <person name="Nishio T."/>
            <person name="Okada M."/>
            <person name="Plessy C."/>
            <person name="Shibata K."/>
            <person name="Shiraki T."/>
            <person name="Suzuki S."/>
            <person name="Tagami M."/>
            <person name="Waki K."/>
            <person name="Watahiki A."/>
            <person name="Okamura-Oho Y."/>
            <person name="Suzuki H."/>
            <person name="Kawai J."/>
            <person name="Hayashizaki Y."/>
        </authorList>
    </citation>
    <scope>NUCLEOTIDE SEQUENCE [LARGE SCALE MRNA]</scope>
    <source>
        <strain>C57BL/6J</strain>
        <strain>NOD</strain>
        <tissue>Cerebellum</tissue>
        <tissue>Hippocampus</tissue>
        <tissue>Kidney</tissue>
        <tissue>Pituitary</tissue>
        <tissue>Sympathetic ganglion</tissue>
        <tissue>Thymus</tissue>
    </source>
</reference>
<reference key="4">
    <citation type="journal article" date="2004" name="Genome Res.">
        <title>The status, quality, and expansion of the NIH full-length cDNA project: the Mammalian Gene Collection (MGC).</title>
        <authorList>
            <consortium name="The MGC Project Team"/>
        </authorList>
    </citation>
    <scope>NUCLEOTIDE SEQUENCE [LARGE SCALE MRNA]</scope>
    <source>
        <strain>C57BL/6J</strain>
        <tissue>Eye</tissue>
    </source>
</reference>
<reference key="5">
    <citation type="journal article" date="2009" name="Immunity">
        <title>The phagosomal proteome in interferon-gamma-activated macrophages.</title>
        <authorList>
            <person name="Trost M."/>
            <person name="English L."/>
            <person name="Lemieux S."/>
            <person name="Courcelles M."/>
            <person name="Desjardins M."/>
            <person name="Thibault P."/>
        </authorList>
    </citation>
    <scope>PHOSPHORYLATION [LARGE SCALE ANALYSIS] AT SER-364</scope>
    <scope>IDENTIFICATION BY MASS SPECTROMETRY [LARGE SCALE ANALYSIS]</scope>
</reference>
<reference key="6">
    <citation type="journal article" date="2010" name="Cell">
        <title>A tissue-specific atlas of mouse protein phosphorylation and expression.</title>
        <authorList>
            <person name="Huttlin E.L."/>
            <person name="Jedrychowski M.P."/>
            <person name="Elias J.E."/>
            <person name="Goswami T."/>
            <person name="Rad R."/>
            <person name="Beausoleil S.A."/>
            <person name="Villen J."/>
            <person name="Haas W."/>
            <person name="Sowa M.E."/>
            <person name="Gygi S.P."/>
        </authorList>
    </citation>
    <scope>IDENTIFICATION BY MASS SPECTROMETRY [LARGE SCALE ANALYSIS]</scope>
    <source>
        <tissue>Liver</tissue>
        <tissue>Testis</tissue>
    </source>
</reference>
<comment type="function">
    <text evidence="1">Enhances the incorporation of serine into phosphatidylserine and sphingolipids.</text>
</comment>
<comment type="subunit">
    <text evidence="1">Interacts with SPTLC1.</text>
</comment>
<comment type="subcellular location">
    <subcellularLocation>
        <location evidence="1">Endoplasmic reticulum membrane</location>
        <topology evidence="1">Multi-pass membrane protein</topology>
    </subcellularLocation>
</comment>
<comment type="tissue specificity">
    <text>Highly expressed in the neuronal populations such as Purkinje cells in the cerebellum, brainstem and spinal motor neurons, locus coeruleus and raphe nuclei.</text>
</comment>
<comment type="similarity">
    <text evidence="4">Belongs to the TDE1 family.</text>
</comment>
<organism>
    <name type="scientific">Mus musculus</name>
    <name type="common">Mouse</name>
    <dbReference type="NCBI Taxonomy" id="10090"/>
    <lineage>
        <taxon>Eukaryota</taxon>
        <taxon>Metazoa</taxon>
        <taxon>Chordata</taxon>
        <taxon>Craniata</taxon>
        <taxon>Vertebrata</taxon>
        <taxon>Euteleostomi</taxon>
        <taxon>Mammalia</taxon>
        <taxon>Eutheria</taxon>
        <taxon>Euarchontoglires</taxon>
        <taxon>Glires</taxon>
        <taxon>Rodentia</taxon>
        <taxon>Myomorpha</taxon>
        <taxon>Muroidea</taxon>
        <taxon>Muridae</taxon>
        <taxon>Murinae</taxon>
        <taxon>Mus</taxon>
        <taxon>Mus</taxon>
    </lineage>
</organism>
<sequence>MGSVLGLCSVASWIPCLCGSAPCLLCRCCPSGNNSTVTRLIYALFLLVGVCVACVMLIPGMEEQLNKIPGFCENEKGVVPCNILVGYKAVYRLCFGLAMFYLLLSLLMIKVKSSSDPRAAVHNGFWFFKFATAVAIIIGAFFIPEGTFTTVWFYVGMAGAFCFILIQLVLLIDFAHSWNESWVEKMEEGNSRCWYAALLSATALNYLLSLVAVVLFFVYYTHPASCAENKAFISVNMLLCIGASVMSILPKIQESQPRSGLLQSSVITVYTMYLTWSAMTNEPETNCNPSLLSIIGFNTTRPIPKDGQSVQWWHPQGIIGLVLFLLCVFYSSIRTSNNSQVNKLTLTSDESTLIEDGNGRSDGSLDDGDGIHRAVDNERDGVTYSYSFFHFMLFLASLYIMMTLTNWYRYEPSREMKSQWTAVWVKISSSWIGLVLYVWTLVAPLVLTNRDFD</sequence>
<name>SERC1_MOUSE</name>